<reference key="1">
    <citation type="journal article" date="2000" name="Science">
        <title>The genome sequence of Drosophila melanogaster.</title>
        <authorList>
            <person name="Adams M.D."/>
            <person name="Celniker S.E."/>
            <person name="Holt R.A."/>
            <person name="Evans C.A."/>
            <person name="Gocayne J.D."/>
            <person name="Amanatides P.G."/>
            <person name="Scherer S.E."/>
            <person name="Li P.W."/>
            <person name="Hoskins R.A."/>
            <person name="Galle R.F."/>
            <person name="George R.A."/>
            <person name="Lewis S.E."/>
            <person name="Richards S."/>
            <person name="Ashburner M."/>
            <person name="Henderson S.N."/>
            <person name="Sutton G.G."/>
            <person name="Wortman J.R."/>
            <person name="Yandell M.D."/>
            <person name="Zhang Q."/>
            <person name="Chen L.X."/>
            <person name="Brandon R.C."/>
            <person name="Rogers Y.-H.C."/>
            <person name="Blazej R.G."/>
            <person name="Champe M."/>
            <person name="Pfeiffer B.D."/>
            <person name="Wan K.H."/>
            <person name="Doyle C."/>
            <person name="Baxter E.G."/>
            <person name="Helt G."/>
            <person name="Nelson C.R."/>
            <person name="Miklos G.L.G."/>
            <person name="Abril J.F."/>
            <person name="Agbayani A."/>
            <person name="An H.-J."/>
            <person name="Andrews-Pfannkoch C."/>
            <person name="Baldwin D."/>
            <person name="Ballew R.M."/>
            <person name="Basu A."/>
            <person name="Baxendale J."/>
            <person name="Bayraktaroglu L."/>
            <person name="Beasley E.M."/>
            <person name="Beeson K.Y."/>
            <person name="Benos P.V."/>
            <person name="Berman B.P."/>
            <person name="Bhandari D."/>
            <person name="Bolshakov S."/>
            <person name="Borkova D."/>
            <person name="Botchan M.R."/>
            <person name="Bouck J."/>
            <person name="Brokstein P."/>
            <person name="Brottier P."/>
            <person name="Burtis K.C."/>
            <person name="Busam D.A."/>
            <person name="Butler H."/>
            <person name="Cadieu E."/>
            <person name="Center A."/>
            <person name="Chandra I."/>
            <person name="Cherry J.M."/>
            <person name="Cawley S."/>
            <person name="Dahlke C."/>
            <person name="Davenport L.B."/>
            <person name="Davies P."/>
            <person name="de Pablos B."/>
            <person name="Delcher A."/>
            <person name="Deng Z."/>
            <person name="Mays A.D."/>
            <person name="Dew I."/>
            <person name="Dietz S.M."/>
            <person name="Dodson K."/>
            <person name="Doup L.E."/>
            <person name="Downes M."/>
            <person name="Dugan-Rocha S."/>
            <person name="Dunkov B.C."/>
            <person name="Dunn P."/>
            <person name="Durbin K.J."/>
            <person name="Evangelista C.C."/>
            <person name="Ferraz C."/>
            <person name="Ferriera S."/>
            <person name="Fleischmann W."/>
            <person name="Fosler C."/>
            <person name="Gabrielian A.E."/>
            <person name="Garg N.S."/>
            <person name="Gelbart W.M."/>
            <person name="Glasser K."/>
            <person name="Glodek A."/>
            <person name="Gong F."/>
            <person name="Gorrell J.H."/>
            <person name="Gu Z."/>
            <person name="Guan P."/>
            <person name="Harris M."/>
            <person name="Harris N.L."/>
            <person name="Harvey D.A."/>
            <person name="Heiman T.J."/>
            <person name="Hernandez J.R."/>
            <person name="Houck J."/>
            <person name="Hostin D."/>
            <person name="Houston K.A."/>
            <person name="Howland T.J."/>
            <person name="Wei M.-H."/>
            <person name="Ibegwam C."/>
            <person name="Jalali M."/>
            <person name="Kalush F."/>
            <person name="Karpen G.H."/>
            <person name="Ke Z."/>
            <person name="Kennison J.A."/>
            <person name="Ketchum K.A."/>
            <person name="Kimmel B.E."/>
            <person name="Kodira C.D."/>
            <person name="Kraft C.L."/>
            <person name="Kravitz S."/>
            <person name="Kulp D."/>
            <person name="Lai Z."/>
            <person name="Lasko P."/>
            <person name="Lei Y."/>
            <person name="Levitsky A.A."/>
            <person name="Li J.H."/>
            <person name="Li Z."/>
            <person name="Liang Y."/>
            <person name="Lin X."/>
            <person name="Liu X."/>
            <person name="Mattei B."/>
            <person name="McIntosh T.C."/>
            <person name="McLeod M.P."/>
            <person name="McPherson D."/>
            <person name="Merkulov G."/>
            <person name="Milshina N.V."/>
            <person name="Mobarry C."/>
            <person name="Morris J."/>
            <person name="Moshrefi A."/>
            <person name="Mount S.M."/>
            <person name="Moy M."/>
            <person name="Murphy B."/>
            <person name="Murphy L."/>
            <person name="Muzny D.M."/>
            <person name="Nelson D.L."/>
            <person name="Nelson D.R."/>
            <person name="Nelson K.A."/>
            <person name="Nixon K."/>
            <person name="Nusskern D.R."/>
            <person name="Pacleb J.M."/>
            <person name="Palazzolo M."/>
            <person name="Pittman G.S."/>
            <person name="Pan S."/>
            <person name="Pollard J."/>
            <person name="Puri V."/>
            <person name="Reese M.G."/>
            <person name="Reinert K."/>
            <person name="Remington K."/>
            <person name="Saunders R.D.C."/>
            <person name="Scheeler F."/>
            <person name="Shen H."/>
            <person name="Shue B.C."/>
            <person name="Siden-Kiamos I."/>
            <person name="Simpson M."/>
            <person name="Skupski M.P."/>
            <person name="Smith T.J."/>
            <person name="Spier E."/>
            <person name="Spradling A.C."/>
            <person name="Stapleton M."/>
            <person name="Strong R."/>
            <person name="Sun E."/>
            <person name="Svirskas R."/>
            <person name="Tector C."/>
            <person name="Turner R."/>
            <person name="Venter E."/>
            <person name="Wang A.H."/>
            <person name="Wang X."/>
            <person name="Wang Z.-Y."/>
            <person name="Wassarman D.A."/>
            <person name="Weinstock G.M."/>
            <person name="Weissenbach J."/>
            <person name="Williams S.M."/>
            <person name="Woodage T."/>
            <person name="Worley K.C."/>
            <person name="Wu D."/>
            <person name="Yang S."/>
            <person name="Yao Q.A."/>
            <person name="Ye J."/>
            <person name="Yeh R.-F."/>
            <person name="Zaveri J.S."/>
            <person name="Zhan M."/>
            <person name="Zhang G."/>
            <person name="Zhao Q."/>
            <person name="Zheng L."/>
            <person name="Zheng X.H."/>
            <person name="Zhong F.N."/>
            <person name="Zhong W."/>
            <person name="Zhou X."/>
            <person name="Zhu S.C."/>
            <person name="Zhu X."/>
            <person name="Smith H.O."/>
            <person name="Gibbs R.A."/>
            <person name="Myers E.W."/>
            <person name="Rubin G.M."/>
            <person name="Venter J.C."/>
        </authorList>
    </citation>
    <scope>NUCLEOTIDE SEQUENCE [LARGE SCALE GENOMIC DNA]</scope>
    <source>
        <strain>Berkeley</strain>
    </source>
</reference>
<reference key="2">
    <citation type="journal article" date="2002" name="Genome Biol.">
        <title>Annotation of the Drosophila melanogaster euchromatic genome: a systematic review.</title>
        <authorList>
            <person name="Misra S."/>
            <person name="Crosby M.A."/>
            <person name="Mungall C.J."/>
            <person name="Matthews B.B."/>
            <person name="Campbell K.S."/>
            <person name="Hradecky P."/>
            <person name="Huang Y."/>
            <person name="Kaminker J.S."/>
            <person name="Millburn G.H."/>
            <person name="Prochnik S.E."/>
            <person name="Smith C.D."/>
            <person name="Tupy J.L."/>
            <person name="Whitfield E.J."/>
            <person name="Bayraktaroglu L."/>
            <person name="Berman B.P."/>
            <person name="Bettencourt B.R."/>
            <person name="Celniker S.E."/>
            <person name="de Grey A.D.N.J."/>
            <person name="Drysdale R.A."/>
            <person name="Harris N.L."/>
            <person name="Richter J."/>
            <person name="Russo S."/>
            <person name="Schroeder A.J."/>
            <person name="Shu S.Q."/>
            <person name="Stapleton M."/>
            <person name="Yamada C."/>
            <person name="Ashburner M."/>
            <person name="Gelbart W.M."/>
            <person name="Rubin G.M."/>
            <person name="Lewis S.E."/>
        </authorList>
    </citation>
    <scope>GENOME REANNOTATION</scope>
    <source>
        <strain>Berkeley</strain>
    </source>
</reference>
<proteinExistence type="inferred from homology"/>
<comment type="function">
    <text evidence="1">Odorant receptor which mediates acceptance or avoidance behavior, depending on its substrates. The odorant receptor repertoire encodes a large collection of odor stimuli that vary widely in identity, intensity, and duration. May form a complex with Orco to form odorant-sensing units, providing sensitive and prolonged odorant signaling and calcium permeability (By similarity).</text>
</comment>
<comment type="subunit">
    <text evidence="1">Interacts with Orco. Complexes exist early in the endomembrane system in olfactory sensory neurons (OSNs), coupling these complexes to the conserved ciliary trafficking pathway (By similarity).</text>
</comment>
<comment type="subcellular location">
    <subcellularLocation>
        <location evidence="1">Cell membrane</location>
        <topology evidence="1">Multi-pass membrane protein</topology>
    </subcellularLocation>
</comment>
<comment type="miscellaneous">
    <text>The atypical heteromeric and topological design of the odorant receptors appears to be an insect-specific solution for odor recognition, making the OR/Orco complex an attractive target for the development of highly selective insect repellents to disrupt olfactory-mediated host-seeking behaviors of insect disease vectors. Odor-evoked OR currents are independent of known G-protein-coupled second messenger pathways.</text>
</comment>
<comment type="similarity">
    <text evidence="3">Belongs to the insect chemoreceptor superfamily. Heteromeric odorant receptor channel (TC 1.A.69) family. Or1a subfamily.</text>
</comment>
<evidence type="ECO:0000250" key="1"/>
<evidence type="ECO:0000255" key="2"/>
<evidence type="ECO:0000305" key="3"/>
<sequence length="384" mass="43644">MLTDKFLRLQSALFRLLGLELLHEQDVGHRYPWRSICCILSVASFMPLTIAFGLQNVQNVEQLTDSLCSVLVDLLALCKIGLFLWLYKDFKFLIGQFYCVLQTETHTAVAEMIVTRESRRDQFISAMYAYCFITAGLSACLMSPLSMLISYQRTGELQPKFPFPSVYPWDNMKLSNYIISYFWNVCAALGVALPTVCVDTLFCSLSHNLCALFQIARHKMMHFEGRNTKETHENLKHVFQLYALCLNLGHFLNEYFRPLICQFVAASLHLCVLCYQLSANILQPALLFYAAFTAAVVGQVSIYCFCGSSIHSECQLFGQAIYESSWPHLLQENLQLVSSLKIAMMRSSLGCPIDGYFFEANRETLITVSKAFIKVSKKTPQVND</sequence>
<accession>Q9VAW0</accession>
<name>OR98B_DROME</name>
<organism>
    <name type="scientific">Drosophila melanogaster</name>
    <name type="common">Fruit fly</name>
    <dbReference type="NCBI Taxonomy" id="7227"/>
    <lineage>
        <taxon>Eukaryota</taxon>
        <taxon>Metazoa</taxon>
        <taxon>Ecdysozoa</taxon>
        <taxon>Arthropoda</taxon>
        <taxon>Hexapoda</taxon>
        <taxon>Insecta</taxon>
        <taxon>Pterygota</taxon>
        <taxon>Neoptera</taxon>
        <taxon>Endopterygota</taxon>
        <taxon>Diptera</taxon>
        <taxon>Brachycera</taxon>
        <taxon>Muscomorpha</taxon>
        <taxon>Ephydroidea</taxon>
        <taxon>Drosophilidae</taxon>
        <taxon>Drosophila</taxon>
        <taxon>Sophophora</taxon>
    </lineage>
</organism>
<dbReference type="EMBL" id="AE014297">
    <property type="protein sequence ID" value="AAF56788.3"/>
    <property type="molecule type" value="Genomic_DNA"/>
</dbReference>
<dbReference type="RefSeq" id="NP_524540.4">
    <property type="nucleotide sequence ID" value="NM_079816.4"/>
</dbReference>
<dbReference type="SMR" id="Q9VAW0"/>
<dbReference type="BioGRID" id="68254">
    <property type="interactions" value="5"/>
</dbReference>
<dbReference type="DIP" id="DIP-22652N"/>
<dbReference type="FunCoup" id="Q9VAW0">
    <property type="interactions" value="6"/>
</dbReference>
<dbReference type="IntAct" id="Q9VAW0">
    <property type="interactions" value="4"/>
</dbReference>
<dbReference type="STRING" id="7227.FBpp0312615"/>
<dbReference type="PaxDb" id="7227-FBpp0084657"/>
<dbReference type="EnsemblMetazoa" id="FBtr0347602">
    <property type="protein sequence ID" value="FBpp0312615"/>
    <property type="gene ID" value="FBgn0039582"/>
</dbReference>
<dbReference type="GeneID" id="43375"/>
<dbReference type="KEGG" id="dme:Dmel_CG1867"/>
<dbReference type="AGR" id="FB:FBgn0039582"/>
<dbReference type="CTD" id="43375"/>
<dbReference type="FlyBase" id="FBgn0039582">
    <property type="gene designation" value="Or98b"/>
</dbReference>
<dbReference type="VEuPathDB" id="VectorBase:FBgn0039582"/>
<dbReference type="eggNOG" id="ENOG502RVJ8">
    <property type="taxonomic scope" value="Eukaryota"/>
</dbReference>
<dbReference type="HOGENOM" id="CLU_720760_0_0_1"/>
<dbReference type="InParanoid" id="Q9VAW0"/>
<dbReference type="OrthoDB" id="6597368at2759"/>
<dbReference type="PhylomeDB" id="Q9VAW0"/>
<dbReference type="SignaLink" id="Q9VAW0"/>
<dbReference type="BioGRID-ORCS" id="43375">
    <property type="hits" value="0 hits in 1 CRISPR screen"/>
</dbReference>
<dbReference type="GenomeRNAi" id="43375"/>
<dbReference type="PRO" id="PR:Q9VAW0"/>
<dbReference type="Proteomes" id="UP000000803">
    <property type="component" value="Chromosome 3R"/>
</dbReference>
<dbReference type="GO" id="GO:0034703">
    <property type="term" value="C:cation channel complex"/>
    <property type="evidence" value="ECO:0000250"/>
    <property type="project" value="FlyBase"/>
</dbReference>
<dbReference type="GO" id="GO:0032590">
    <property type="term" value="C:dendrite membrane"/>
    <property type="evidence" value="ECO:0000250"/>
    <property type="project" value="FlyBase"/>
</dbReference>
<dbReference type="GO" id="GO:0005886">
    <property type="term" value="C:plasma membrane"/>
    <property type="evidence" value="ECO:0000250"/>
    <property type="project" value="FlyBase"/>
</dbReference>
<dbReference type="GO" id="GO:0170020">
    <property type="term" value="F:ionotropic olfactory receptor activity"/>
    <property type="evidence" value="ECO:0000250"/>
    <property type="project" value="FlyBase"/>
</dbReference>
<dbReference type="GO" id="GO:0005549">
    <property type="term" value="F:odorant binding"/>
    <property type="evidence" value="ECO:0000250"/>
    <property type="project" value="FlyBase"/>
</dbReference>
<dbReference type="GO" id="GO:0004984">
    <property type="term" value="F:olfactory receptor activity"/>
    <property type="evidence" value="ECO:0000318"/>
    <property type="project" value="GO_Central"/>
</dbReference>
<dbReference type="GO" id="GO:0050911">
    <property type="term" value="P:detection of chemical stimulus involved in sensory perception of smell"/>
    <property type="evidence" value="ECO:0000250"/>
    <property type="project" value="FlyBase"/>
</dbReference>
<dbReference type="GO" id="GO:0007165">
    <property type="term" value="P:signal transduction"/>
    <property type="evidence" value="ECO:0007669"/>
    <property type="project" value="UniProtKB-KW"/>
</dbReference>
<dbReference type="InterPro" id="IPR004117">
    <property type="entry name" value="7tm6_olfct_rcpt"/>
</dbReference>
<dbReference type="PANTHER" id="PTHR21137">
    <property type="entry name" value="ODORANT RECEPTOR"/>
    <property type="match status" value="1"/>
</dbReference>
<dbReference type="PANTHER" id="PTHR21137:SF43">
    <property type="entry name" value="ODORANT RECEPTOR 47A-RELATED"/>
    <property type="match status" value="1"/>
</dbReference>
<dbReference type="Pfam" id="PF02949">
    <property type="entry name" value="7tm_6"/>
    <property type="match status" value="1"/>
</dbReference>
<keyword id="KW-1003">Cell membrane</keyword>
<keyword id="KW-0472">Membrane</keyword>
<keyword id="KW-0552">Olfaction</keyword>
<keyword id="KW-0675">Receptor</keyword>
<keyword id="KW-1185">Reference proteome</keyword>
<keyword id="KW-0716">Sensory transduction</keyword>
<keyword id="KW-0807">Transducer</keyword>
<keyword id="KW-0812">Transmembrane</keyword>
<keyword id="KW-1133">Transmembrane helix</keyword>
<feature type="chain" id="PRO_0000174285" description="Putative odorant receptor 98b">
    <location>
        <begin position="1"/>
        <end position="384"/>
    </location>
</feature>
<feature type="topological domain" description="Cytoplasmic" evidence="2">
    <location>
        <begin position="1"/>
        <end position="34"/>
    </location>
</feature>
<feature type="transmembrane region" description="Helical; Name=1" evidence="2">
    <location>
        <begin position="35"/>
        <end position="55"/>
    </location>
</feature>
<feature type="topological domain" description="Extracellular" evidence="2">
    <location>
        <begin position="56"/>
        <end position="66"/>
    </location>
</feature>
<feature type="transmembrane region" description="Helical; Name=2" evidence="2">
    <location>
        <begin position="67"/>
        <end position="87"/>
    </location>
</feature>
<feature type="topological domain" description="Cytoplasmic" evidence="2">
    <location>
        <begin position="88"/>
        <end position="128"/>
    </location>
</feature>
<feature type="transmembrane region" description="Helical; Name=3" evidence="2">
    <location>
        <begin position="129"/>
        <end position="149"/>
    </location>
</feature>
<feature type="topological domain" description="Extracellular" evidence="2">
    <location>
        <begin position="150"/>
        <end position="177"/>
    </location>
</feature>
<feature type="transmembrane region" description="Helical; Name=4" evidence="2">
    <location>
        <begin position="178"/>
        <end position="198"/>
    </location>
</feature>
<feature type="topological domain" description="Cytoplasmic" evidence="2">
    <location>
        <begin position="199"/>
        <end position="258"/>
    </location>
</feature>
<feature type="transmembrane region" description="Helical; Name=5" evidence="2">
    <location>
        <begin position="259"/>
        <end position="279"/>
    </location>
</feature>
<feature type="topological domain" description="Extracellular" evidence="2">
    <location>
        <begin position="280"/>
        <end position="284"/>
    </location>
</feature>
<feature type="transmembrane region" description="Helical; Name=6" evidence="2">
    <location>
        <begin position="285"/>
        <end position="305"/>
    </location>
</feature>
<feature type="topological domain" description="Cytoplasmic" evidence="2">
    <location>
        <begin position="306"/>
        <end position="329"/>
    </location>
</feature>
<feature type="transmembrane region" description="Helical; Name=7" evidence="2">
    <location>
        <begin position="330"/>
        <end position="350"/>
    </location>
</feature>
<feature type="topological domain" description="Extracellular" evidence="2">
    <location>
        <begin position="351"/>
        <end position="384"/>
    </location>
</feature>
<protein>
    <recommendedName>
        <fullName>Putative odorant receptor 98b</fullName>
    </recommendedName>
</protein>
<gene>
    <name type="primary">Or98b</name>
    <name type="ORF">CG1867</name>
</gene>